<reference key="1">
    <citation type="journal article" date="2005" name="J. Infect. Dis.">
        <title>Genome sequence of a serotype M28 strain of group A Streptococcus: potential new insights into puerperal sepsis and bacterial disease specificity.</title>
        <authorList>
            <person name="Green N.M."/>
            <person name="Zhang S."/>
            <person name="Porcella S.F."/>
            <person name="Nagiec M.J."/>
            <person name="Barbian K.D."/>
            <person name="Beres S.B."/>
            <person name="Lefebvre R.B."/>
            <person name="Musser J.M."/>
        </authorList>
    </citation>
    <scope>NUCLEOTIDE SEQUENCE [LARGE SCALE GENOMIC DNA]</scope>
    <source>
        <strain>MGAS6180</strain>
    </source>
</reference>
<dbReference type="EMBL" id="CP000056">
    <property type="protein sequence ID" value="AAX71931.1"/>
    <property type="molecule type" value="Genomic_DNA"/>
</dbReference>
<dbReference type="RefSeq" id="WP_002984705.1">
    <property type="nucleotide sequence ID" value="NC_007296.2"/>
</dbReference>
<dbReference type="SMR" id="Q48TM9"/>
<dbReference type="KEGG" id="spb:M28_Spy0818"/>
<dbReference type="HOGENOM" id="CLU_061534_1_1_9"/>
<dbReference type="GO" id="GO:0005737">
    <property type="term" value="C:cytoplasm"/>
    <property type="evidence" value="ECO:0007669"/>
    <property type="project" value="UniProtKB-SubCell"/>
</dbReference>
<dbReference type="GO" id="GO:0003677">
    <property type="term" value="F:DNA binding"/>
    <property type="evidence" value="ECO:0007669"/>
    <property type="project" value="UniProtKB-UniRule"/>
</dbReference>
<dbReference type="GO" id="GO:0003700">
    <property type="term" value="F:DNA-binding transcription factor activity"/>
    <property type="evidence" value="ECO:0007669"/>
    <property type="project" value="UniProtKB-UniRule"/>
</dbReference>
<dbReference type="GO" id="GO:0045892">
    <property type="term" value="P:negative regulation of DNA-templated transcription"/>
    <property type="evidence" value="ECO:0007669"/>
    <property type="project" value="InterPro"/>
</dbReference>
<dbReference type="GO" id="GO:0051775">
    <property type="term" value="P:response to redox state"/>
    <property type="evidence" value="ECO:0007669"/>
    <property type="project" value="InterPro"/>
</dbReference>
<dbReference type="Gene3D" id="3.40.50.720">
    <property type="entry name" value="NAD(P)-binding Rossmann-like Domain"/>
    <property type="match status" value="1"/>
</dbReference>
<dbReference type="Gene3D" id="1.10.10.10">
    <property type="entry name" value="Winged helix-like DNA-binding domain superfamily/Winged helix DNA-binding domain"/>
    <property type="match status" value="1"/>
</dbReference>
<dbReference type="HAMAP" id="MF_01131">
    <property type="entry name" value="Rex"/>
    <property type="match status" value="1"/>
</dbReference>
<dbReference type="InterPro" id="IPR003781">
    <property type="entry name" value="CoA-bd"/>
</dbReference>
<dbReference type="InterPro" id="IPR036291">
    <property type="entry name" value="NAD(P)-bd_dom_sf"/>
</dbReference>
<dbReference type="InterPro" id="IPR009718">
    <property type="entry name" value="Rex_DNA-bd_C_dom"/>
</dbReference>
<dbReference type="InterPro" id="IPR022876">
    <property type="entry name" value="Tscrpt_rep_Rex"/>
</dbReference>
<dbReference type="InterPro" id="IPR036388">
    <property type="entry name" value="WH-like_DNA-bd_sf"/>
</dbReference>
<dbReference type="InterPro" id="IPR036390">
    <property type="entry name" value="WH_DNA-bd_sf"/>
</dbReference>
<dbReference type="NCBIfam" id="NF003988">
    <property type="entry name" value="PRK05472.1-1"/>
    <property type="match status" value="1"/>
</dbReference>
<dbReference type="NCBIfam" id="NF003989">
    <property type="entry name" value="PRK05472.1-3"/>
    <property type="match status" value="1"/>
</dbReference>
<dbReference type="NCBIfam" id="NF003991">
    <property type="entry name" value="PRK05472.1-5"/>
    <property type="match status" value="1"/>
</dbReference>
<dbReference type="NCBIfam" id="NF003994">
    <property type="entry name" value="PRK05472.2-3"/>
    <property type="match status" value="1"/>
</dbReference>
<dbReference type="NCBIfam" id="NF003995">
    <property type="entry name" value="PRK05472.2-4"/>
    <property type="match status" value="1"/>
</dbReference>
<dbReference type="NCBIfam" id="NF003996">
    <property type="entry name" value="PRK05472.2-5"/>
    <property type="match status" value="1"/>
</dbReference>
<dbReference type="PANTHER" id="PTHR35786">
    <property type="entry name" value="REDOX-SENSING TRANSCRIPTIONAL REPRESSOR REX"/>
    <property type="match status" value="1"/>
</dbReference>
<dbReference type="PANTHER" id="PTHR35786:SF1">
    <property type="entry name" value="REDOX-SENSING TRANSCRIPTIONAL REPRESSOR REX 1"/>
    <property type="match status" value="1"/>
</dbReference>
<dbReference type="Pfam" id="PF02629">
    <property type="entry name" value="CoA_binding"/>
    <property type="match status" value="1"/>
</dbReference>
<dbReference type="Pfam" id="PF06971">
    <property type="entry name" value="Put_DNA-bind_N"/>
    <property type="match status" value="1"/>
</dbReference>
<dbReference type="SMART" id="SM00881">
    <property type="entry name" value="CoA_binding"/>
    <property type="match status" value="1"/>
</dbReference>
<dbReference type="SUPFAM" id="SSF51735">
    <property type="entry name" value="NAD(P)-binding Rossmann-fold domains"/>
    <property type="match status" value="1"/>
</dbReference>
<dbReference type="SUPFAM" id="SSF46785">
    <property type="entry name" value="Winged helix' DNA-binding domain"/>
    <property type="match status" value="1"/>
</dbReference>
<proteinExistence type="inferred from homology"/>
<evidence type="ECO:0000255" key="1">
    <source>
        <dbReference type="HAMAP-Rule" id="MF_01131"/>
    </source>
</evidence>
<accession>Q48TM9</accession>
<feature type="chain" id="PRO_1000065426" description="Redox-sensing transcriptional repressor Rex">
    <location>
        <begin position="1"/>
        <end position="214"/>
    </location>
</feature>
<feature type="DNA-binding region" description="H-T-H motif" evidence="1">
    <location>
        <begin position="17"/>
        <end position="56"/>
    </location>
</feature>
<feature type="binding site" evidence="1">
    <location>
        <begin position="91"/>
        <end position="96"/>
    </location>
    <ligand>
        <name>NAD(+)</name>
        <dbReference type="ChEBI" id="CHEBI:57540"/>
    </ligand>
</feature>
<keyword id="KW-0963">Cytoplasm</keyword>
<keyword id="KW-0238">DNA-binding</keyword>
<keyword id="KW-0520">NAD</keyword>
<keyword id="KW-0678">Repressor</keyword>
<keyword id="KW-0804">Transcription</keyword>
<keyword id="KW-0805">Transcription regulation</keyword>
<name>REX_STRPM</name>
<organism>
    <name type="scientific">Streptococcus pyogenes serotype M28 (strain MGAS6180)</name>
    <dbReference type="NCBI Taxonomy" id="319701"/>
    <lineage>
        <taxon>Bacteria</taxon>
        <taxon>Bacillati</taxon>
        <taxon>Bacillota</taxon>
        <taxon>Bacilli</taxon>
        <taxon>Lactobacillales</taxon>
        <taxon>Streptococcaceae</taxon>
        <taxon>Streptococcus</taxon>
    </lineage>
</organism>
<comment type="function">
    <text evidence="1">Modulates transcription in response to changes in cellular NADH/NAD(+) redox state.</text>
</comment>
<comment type="subunit">
    <text evidence="1">Homodimer.</text>
</comment>
<comment type="subcellular location">
    <subcellularLocation>
        <location evidence="1">Cytoplasm</location>
    </subcellularLocation>
</comment>
<comment type="similarity">
    <text evidence="1">Belongs to the transcriptional regulatory Rex family.</text>
</comment>
<sequence>MVIDKSIPKATAKRLSLYYRIFKRFHADQVEKASSKQIADAMGIDSATVRRDFSYFGELGRRGFGYDVTKLMNFFADLLNDHSTTNVILVGCGNIGRALLHYRFHDRNKMQIAMGFDTDDNALVGTKTADNIPVHGISSVKERIANTDIETAILTVPSIHAQEVTDQLIEAGIKGILSFAPVHLQVPKGVIVQSVDLTSELQTLLYFMNQNHLD</sequence>
<gene>
    <name evidence="1" type="primary">rex</name>
    <name type="ordered locus">M28_Spy0818</name>
</gene>
<protein>
    <recommendedName>
        <fullName evidence="1">Redox-sensing transcriptional repressor Rex</fullName>
    </recommendedName>
</protein>